<accession>B7MJC0</accession>
<organism>
    <name type="scientific">Escherichia coli O45:K1 (strain S88 / ExPEC)</name>
    <dbReference type="NCBI Taxonomy" id="585035"/>
    <lineage>
        <taxon>Bacteria</taxon>
        <taxon>Pseudomonadati</taxon>
        <taxon>Pseudomonadota</taxon>
        <taxon>Gammaproteobacteria</taxon>
        <taxon>Enterobacterales</taxon>
        <taxon>Enterobacteriaceae</taxon>
        <taxon>Escherichia</taxon>
    </lineage>
</organism>
<comment type="function">
    <text evidence="1">Negative regulator of phage lambda lysogenization. Contributes to the degradation of the phage regulatory protein CII. Acts probably by holding CII on the membrane surface, away from the target promoters, but close to the FtsH protease.</text>
</comment>
<comment type="subunit">
    <text evidence="1">Interacts with CII protein from phage lambda.</text>
</comment>
<comment type="subcellular location">
    <subcellularLocation>
        <location>Cytoplasm</location>
    </subcellularLocation>
    <subcellularLocation>
        <location evidence="1">Cell inner membrane</location>
        <topology evidence="1">Peripheral membrane protein</topology>
        <orientation evidence="1">Cytoplasmic side</orientation>
    </subcellularLocation>
</comment>
<comment type="similarity">
    <text evidence="1">Belongs to the HflD family.</text>
</comment>
<dbReference type="EMBL" id="CU928161">
    <property type="protein sequence ID" value="CAR02473.1"/>
    <property type="molecule type" value="Genomic_DNA"/>
</dbReference>
<dbReference type="RefSeq" id="WP_001295971.1">
    <property type="nucleotide sequence ID" value="NC_011742.1"/>
</dbReference>
<dbReference type="SMR" id="B7MJC0"/>
<dbReference type="KEGG" id="ecz:ECS88_1147"/>
<dbReference type="HOGENOM" id="CLU_098920_0_0_6"/>
<dbReference type="Proteomes" id="UP000000747">
    <property type="component" value="Chromosome"/>
</dbReference>
<dbReference type="GO" id="GO:0005737">
    <property type="term" value="C:cytoplasm"/>
    <property type="evidence" value="ECO:0007669"/>
    <property type="project" value="UniProtKB-SubCell"/>
</dbReference>
<dbReference type="GO" id="GO:0005886">
    <property type="term" value="C:plasma membrane"/>
    <property type="evidence" value="ECO:0007669"/>
    <property type="project" value="UniProtKB-SubCell"/>
</dbReference>
<dbReference type="FunFam" id="1.10.3890.10:FF:000001">
    <property type="entry name" value="High frequency lysogenization protein HflD homolog"/>
    <property type="match status" value="1"/>
</dbReference>
<dbReference type="Gene3D" id="1.10.3890.10">
    <property type="entry name" value="HflD-like"/>
    <property type="match status" value="1"/>
</dbReference>
<dbReference type="HAMAP" id="MF_00695">
    <property type="entry name" value="HflD_protein"/>
    <property type="match status" value="1"/>
</dbReference>
<dbReference type="InterPro" id="IPR007451">
    <property type="entry name" value="HflD"/>
</dbReference>
<dbReference type="InterPro" id="IPR035932">
    <property type="entry name" value="HflD-like_sf"/>
</dbReference>
<dbReference type="NCBIfam" id="NF001245">
    <property type="entry name" value="PRK00218.1-1"/>
    <property type="match status" value="1"/>
</dbReference>
<dbReference type="NCBIfam" id="NF001246">
    <property type="entry name" value="PRK00218.1-2"/>
    <property type="match status" value="1"/>
</dbReference>
<dbReference type="NCBIfam" id="NF001248">
    <property type="entry name" value="PRK00218.1-4"/>
    <property type="match status" value="1"/>
</dbReference>
<dbReference type="NCBIfam" id="NF001249">
    <property type="entry name" value="PRK00218.1-5"/>
    <property type="match status" value="1"/>
</dbReference>
<dbReference type="PANTHER" id="PTHR38100">
    <property type="entry name" value="HIGH FREQUENCY LYSOGENIZATION PROTEIN HFLD"/>
    <property type="match status" value="1"/>
</dbReference>
<dbReference type="PANTHER" id="PTHR38100:SF1">
    <property type="entry name" value="HIGH FREQUENCY LYSOGENIZATION PROTEIN HFLD"/>
    <property type="match status" value="1"/>
</dbReference>
<dbReference type="Pfam" id="PF04356">
    <property type="entry name" value="DUF489"/>
    <property type="match status" value="1"/>
</dbReference>
<dbReference type="SUPFAM" id="SSF101322">
    <property type="entry name" value="YcfC-like"/>
    <property type="match status" value="1"/>
</dbReference>
<gene>
    <name evidence="1" type="primary">hflD</name>
    <name type="ordered locus">ECS88_1147</name>
</gene>
<protein>
    <recommendedName>
        <fullName evidence="1">High frequency lysogenization protein HflD</fullName>
    </recommendedName>
</protein>
<feature type="chain" id="PRO_1000132282" description="High frequency lysogenization protein HflD">
    <location>
        <begin position="1"/>
        <end position="213"/>
    </location>
</feature>
<feature type="coiled-coil region" evidence="1">
    <location>
        <begin position="79"/>
        <end position="126"/>
    </location>
</feature>
<name>HFLD_ECO45</name>
<keyword id="KW-0997">Cell inner membrane</keyword>
<keyword id="KW-1003">Cell membrane</keyword>
<keyword id="KW-0175">Coiled coil</keyword>
<keyword id="KW-0963">Cytoplasm</keyword>
<keyword id="KW-0472">Membrane</keyword>
<keyword id="KW-1185">Reference proteome</keyword>
<evidence type="ECO:0000255" key="1">
    <source>
        <dbReference type="HAMAP-Rule" id="MF_00695"/>
    </source>
</evidence>
<proteinExistence type="inferred from homology"/>
<reference key="1">
    <citation type="journal article" date="2009" name="PLoS Genet.">
        <title>Organised genome dynamics in the Escherichia coli species results in highly diverse adaptive paths.</title>
        <authorList>
            <person name="Touchon M."/>
            <person name="Hoede C."/>
            <person name="Tenaillon O."/>
            <person name="Barbe V."/>
            <person name="Baeriswyl S."/>
            <person name="Bidet P."/>
            <person name="Bingen E."/>
            <person name="Bonacorsi S."/>
            <person name="Bouchier C."/>
            <person name="Bouvet O."/>
            <person name="Calteau A."/>
            <person name="Chiapello H."/>
            <person name="Clermont O."/>
            <person name="Cruveiller S."/>
            <person name="Danchin A."/>
            <person name="Diard M."/>
            <person name="Dossat C."/>
            <person name="Karoui M.E."/>
            <person name="Frapy E."/>
            <person name="Garry L."/>
            <person name="Ghigo J.M."/>
            <person name="Gilles A.M."/>
            <person name="Johnson J."/>
            <person name="Le Bouguenec C."/>
            <person name="Lescat M."/>
            <person name="Mangenot S."/>
            <person name="Martinez-Jehanne V."/>
            <person name="Matic I."/>
            <person name="Nassif X."/>
            <person name="Oztas S."/>
            <person name="Petit M.A."/>
            <person name="Pichon C."/>
            <person name="Rouy Z."/>
            <person name="Ruf C.S."/>
            <person name="Schneider D."/>
            <person name="Tourret J."/>
            <person name="Vacherie B."/>
            <person name="Vallenet D."/>
            <person name="Medigue C."/>
            <person name="Rocha E.P.C."/>
            <person name="Denamur E."/>
        </authorList>
    </citation>
    <scope>NUCLEOTIDE SEQUENCE [LARGE SCALE GENOMIC DNA]</scope>
    <source>
        <strain>S88 / ExPEC</strain>
    </source>
</reference>
<sequence>MAKNYYDITLALAGICQSARLVQQLAHQGHCDGDALHVSLNSIIDMNPSSTLAVFGGSEANLRVGLETLLGVLNASSRQGLNAELTRYTLSLMVLERKLSSAKGALDTLGNRINGLQRQLEHFDLQSETLMSAMAAIYVDVISPLGPRIQVTGSPAVLQSPQVQAKVRATLLAGIRAAVLWHQVGGGRLQLMFSRNRLTTQAKQILAHLTPEL</sequence>